<evidence type="ECO:0000255" key="1">
    <source>
        <dbReference type="PROSITE-ProRule" id="PRU00498"/>
    </source>
</evidence>
<evidence type="ECO:0000269" key="2">
    <source>
    </source>
</evidence>
<evidence type="ECO:0000269" key="3">
    <source>
    </source>
</evidence>
<evidence type="ECO:0000269" key="4">
    <source>
    </source>
</evidence>
<evidence type="ECO:0000269" key="5">
    <source>
    </source>
</evidence>
<evidence type="ECO:0000305" key="6"/>
<evidence type="ECO:0007744" key="7">
    <source>
        <dbReference type="PDB" id="1BCR"/>
    </source>
</evidence>
<evidence type="ECO:0007744" key="8">
    <source>
        <dbReference type="PDB" id="1BCS"/>
    </source>
</evidence>
<evidence type="ECO:0007744" key="9">
    <source>
        <dbReference type="PDB" id="1WHS"/>
    </source>
</evidence>
<evidence type="ECO:0007744" key="10">
    <source>
        <dbReference type="PDB" id="1WHT"/>
    </source>
</evidence>
<evidence type="ECO:0007744" key="11">
    <source>
        <dbReference type="PDB" id="3SC2"/>
    </source>
</evidence>
<evidence type="ECO:0007829" key="12">
    <source>
        <dbReference type="PDB" id="1BCR"/>
    </source>
</evidence>
<evidence type="ECO:0007829" key="13">
    <source>
        <dbReference type="PDB" id="1WHS"/>
    </source>
</evidence>
<organism>
    <name type="scientific">Triticum aestivum</name>
    <name type="common">Wheat</name>
    <dbReference type="NCBI Taxonomy" id="4565"/>
    <lineage>
        <taxon>Eukaryota</taxon>
        <taxon>Viridiplantae</taxon>
        <taxon>Streptophyta</taxon>
        <taxon>Embryophyta</taxon>
        <taxon>Tracheophyta</taxon>
        <taxon>Spermatophyta</taxon>
        <taxon>Magnoliopsida</taxon>
        <taxon>Liliopsida</taxon>
        <taxon>Poales</taxon>
        <taxon>Poaceae</taxon>
        <taxon>BOP clade</taxon>
        <taxon>Pooideae</taxon>
        <taxon>Triticodae</taxon>
        <taxon>Triticeae</taxon>
        <taxon>Triticinae</taxon>
        <taxon>Triticum</taxon>
    </lineage>
</organism>
<name>CBP2_WHEAT</name>
<comment type="catalytic activity">
    <reaction>
        <text>Preferential release of a C-terminal arginine or lysine residue.</text>
        <dbReference type="EC" id="3.4.16.6"/>
    </reaction>
</comment>
<comment type="subunit">
    <text evidence="4 5">Carboxypeptidase II is a dimer, where each monomer is composed of two chains linked by a disulfide bond.</text>
</comment>
<comment type="PTM">
    <text>N-glycosylated.</text>
</comment>
<comment type="allergen">
    <text evidence="3">Causes an allergic reaction in human. Binds to IgE.</text>
</comment>
<comment type="similarity">
    <text evidence="6">Belongs to the peptidase S10 family.</text>
</comment>
<gene>
    <name type="primary">CBP2</name>
</gene>
<accession>P08819</accession>
<accession>Q4W1G1</accession>
<dbReference type="EC" id="3.4.16.6"/>
<dbReference type="EMBL" id="AJ890016">
    <property type="protein sequence ID" value="CAI64396.1"/>
    <property type="molecule type" value="mRNA"/>
</dbReference>
<dbReference type="PIR" id="A29639">
    <property type="entry name" value="A29639"/>
</dbReference>
<dbReference type="PDB" id="1BCR">
    <property type="method" value="X-ray"/>
    <property type="resolution" value="2.50 A"/>
    <property type="chains" value="A=1-263, B=285-444"/>
</dbReference>
<dbReference type="PDB" id="1BCS">
    <property type="method" value="X-ray"/>
    <property type="resolution" value="2.08 A"/>
    <property type="chains" value="A=1-263, B=285-444"/>
</dbReference>
<dbReference type="PDB" id="1WHS">
    <property type="method" value="X-ray"/>
    <property type="resolution" value="2.00 A"/>
    <property type="chains" value="A=6-260, B=287-439"/>
</dbReference>
<dbReference type="PDB" id="1WHT">
    <property type="method" value="X-ray"/>
    <property type="resolution" value="2.00 A"/>
    <property type="chains" value="A=5-260, B=287-439"/>
</dbReference>
<dbReference type="PDB" id="3SC2">
    <property type="method" value="X-ray"/>
    <property type="resolution" value="2.20 A"/>
    <property type="chains" value="A=1-259, B=287-438"/>
</dbReference>
<dbReference type="PDBsum" id="1BCR"/>
<dbReference type="PDBsum" id="1BCS"/>
<dbReference type="PDBsum" id="1WHS"/>
<dbReference type="PDBsum" id="1WHT"/>
<dbReference type="PDBsum" id="3SC2"/>
<dbReference type="SMR" id="P08819"/>
<dbReference type="STRING" id="4565.P08819"/>
<dbReference type="ESTHER" id="wheat-cbp02">
    <property type="family name" value="Carboxypeptidase_S10"/>
</dbReference>
<dbReference type="MEROPS" id="S10.005"/>
<dbReference type="MEROPS" id="S10.A43"/>
<dbReference type="GlyCosmos" id="P08819">
    <property type="glycosylation" value="5 sites, No reported glycans"/>
</dbReference>
<dbReference type="iPTMnet" id="P08819"/>
<dbReference type="PaxDb" id="4565-Traes_1BS_FEA181281.1"/>
<dbReference type="eggNOG" id="KOG1282">
    <property type="taxonomic scope" value="Eukaryota"/>
</dbReference>
<dbReference type="EvolutionaryTrace" id="P08819"/>
<dbReference type="Proteomes" id="UP000019116">
    <property type="component" value="Unplaced"/>
</dbReference>
<dbReference type="ExpressionAtlas" id="P08819">
    <property type="expression patterns" value="baseline and differential"/>
</dbReference>
<dbReference type="GO" id="GO:0004185">
    <property type="term" value="F:serine-type carboxypeptidase activity"/>
    <property type="evidence" value="ECO:0000318"/>
    <property type="project" value="GO_Central"/>
</dbReference>
<dbReference type="GO" id="GO:0006508">
    <property type="term" value="P:proteolysis"/>
    <property type="evidence" value="ECO:0007669"/>
    <property type="project" value="UniProtKB-KW"/>
</dbReference>
<dbReference type="FunFam" id="3.40.50.11320:FF:000003">
    <property type="entry name" value="Carboxypeptidase"/>
    <property type="match status" value="1"/>
</dbReference>
<dbReference type="FunFam" id="3.40.50.1820:FF:000013">
    <property type="entry name" value="Carboxypeptidase"/>
    <property type="match status" value="1"/>
</dbReference>
<dbReference type="Gene3D" id="3.40.50.11320">
    <property type="match status" value="1"/>
</dbReference>
<dbReference type="Gene3D" id="6.10.250.940">
    <property type="match status" value="1"/>
</dbReference>
<dbReference type="Gene3D" id="3.40.50.1820">
    <property type="entry name" value="alpha/beta hydrolase"/>
    <property type="match status" value="1"/>
</dbReference>
<dbReference type="InterPro" id="IPR029058">
    <property type="entry name" value="AB_hydrolase_fold"/>
</dbReference>
<dbReference type="InterPro" id="IPR001563">
    <property type="entry name" value="Peptidase_S10"/>
</dbReference>
<dbReference type="InterPro" id="IPR033124">
    <property type="entry name" value="Ser_caboxypep_his_AS"/>
</dbReference>
<dbReference type="InterPro" id="IPR018202">
    <property type="entry name" value="Ser_caboxypep_ser_AS"/>
</dbReference>
<dbReference type="PANTHER" id="PTHR11802:SF198">
    <property type="entry name" value="SERINE CARBOXYPEPTIDASE-LIKE 27"/>
    <property type="match status" value="1"/>
</dbReference>
<dbReference type="PANTHER" id="PTHR11802">
    <property type="entry name" value="SERINE PROTEASE FAMILY S10 SERINE CARBOXYPEPTIDASE"/>
    <property type="match status" value="1"/>
</dbReference>
<dbReference type="Pfam" id="PF00450">
    <property type="entry name" value="Peptidase_S10"/>
    <property type="match status" value="1"/>
</dbReference>
<dbReference type="PRINTS" id="PR00724">
    <property type="entry name" value="CRBOXYPTASEC"/>
</dbReference>
<dbReference type="SUPFAM" id="SSF53474">
    <property type="entry name" value="alpha/beta-Hydrolases"/>
    <property type="match status" value="1"/>
</dbReference>
<dbReference type="PROSITE" id="PS00560">
    <property type="entry name" value="CARBOXYPEPT_SER_HIS"/>
    <property type="match status" value="1"/>
</dbReference>
<dbReference type="PROSITE" id="PS00131">
    <property type="entry name" value="CARBOXYPEPT_SER_SER"/>
    <property type="match status" value="1"/>
</dbReference>
<sequence>VEPSGHAADRIARLPGQPAVDFDMYSGYITVDEGAGRSLFYLLQEAPEDAQPAPLVLWLNGGPGCSSVAYGASEELGAFRVKPRGAGLVLNEYRWNKVANVLFLDSPAGVGFSYTNTSSDIYTSGDNRTAHDSYAFLAKWFERFPHYKYRDFYIAGESYAGHYVPELSQLVHRSKNPVINLKGFMVGNGLIDDYHDYVGTFEFWWNHGIVSDDTYRRLKEACLHDSFIHPSPACDAATDVATAEQGNIDMYSLYTPVCNITSSSSSSSSSLSQQRRSRGRYPWLTGSYDPCTERYSTAYYNRRDVQMALHANVTGAMNYTWATCSDTINTHWHDAPRSMLPIYRELIAAGLRIWVFSGDTDAVVPLTATRYSIGALGLPTTTSWYPWYDDQEVGGWSQVYKGLTLVSVRGAGHEVPLHRPRQALVLFQYFLQGKPMPGQTKNAT</sequence>
<feature type="chain" id="PRO_0000004312" description="Serine carboxypeptidase 2 chain A">
    <location>
        <begin position="1"/>
        <end position="259"/>
    </location>
</feature>
<feature type="propeptide" id="PRO_0000274569" description="Linker peptide">
    <location>
        <begin position="260"/>
        <end position="286"/>
    </location>
</feature>
<feature type="chain" id="PRO_0000004313" description="Serine carboxypeptidase 2 chain B">
    <location>
        <begin position="287"/>
        <end position="444"/>
    </location>
</feature>
<feature type="active site" evidence="5 7">
    <location>
        <position position="158"/>
    </location>
</feature>
<feature type="active site" evidence="5 7">
    <location>
        <position position="361"/>
    </location>
</feature>
<feature type="active site" evidence="5 7">
    <location>
        <position position="413"/>
    </location>
</feature>
<feature type="binding site" evidence="4 5 7 8 9 10">
    <location>
        <begin position="60"/>
        <end position="62"/>
    </location>
    <ligand>
        <name>substrate</name>
    </ligand>
</feature>
<feature type="binding site" evidence="4 5 7 8 9 10">
    <location>
        <begin position="157"/>
        <end position="159"/>
    </location>
    <ligand>
        <name>substrate</name>
    </ligand>
</feature>
<feature type="binding site" evidence="4 10">
    <location>
        <begin position="409"/>
        <end position="413"/>
    </location>
    <ligand>
        <name>substrate</name>
    </ligand>
</feature>
<feature type="glycosylation site" description="N-linked (GlcNAc...) asparagine" evidence="1 2 4 5 7 10 11">
    <location>
        <position position="116"/>
    </location>
</feature>
<feature type="glycosylation site" description="N-linked (GlcNAc...) asparagine" evidence="1 2 4 5 7 10 11">
    <location>
        <position position="127"/>
    </location>
</feature>
<feature type="glycosylation site" description="N-linked (GlcNAc...) asparagine" evidence="1">
    <location>
        <position position="259"/>
    </location>
</feature>
<feature type="glycosylation site" description="N-linked (GlcNAc...) asparagine" evidence="1 2 4 5 7 10 11">
    <location>
        <position position="312"/>
    </location>
</feature>
<feature type="glycosylation site" description="N-linked (GlcNAc...) asparagine" evidence="1">
    <location>
        <position position="318"/>
    </location>
</feature>
<feature type="disulfide bond" description="Interchain (between A and B chains)" evidence="2 4 5 7 8 9 10 11">
    <location>
        <begin position="65"/>
        <end position="324"/>
    </location>
</feature>
<feature type="disulfide bond" evidence="2 4 5 7 8 9 10 11">
    <location>
        <begin position="222"/>
        <end position="234"/>
    </location>
</feature>
<feature type="disulfide bond" description="Interchain (between A and B chains)" evidence="2 4 5 7 8 9 10 11">
    <location>
        <begin position="258"/>
        <end position="291"/>
    </location>
</feature>
<feature type="sequence variant" description="In a' chain.">
    <location>
        <begin position="1"/>
        <end position="3"/>
    </location>
</feature>
<feature type="sequence conflict" description="In Ref. 3; CAI64396." evidence="6" ref="3">
    <original>I</original>
    <variation>L</variation>
    <location>
        <position position="209"/>
    </location>
</feature>
<feature type="sequence conflict" description="In Ref. 3; CAI64396." evidence="6" ref="3">
    <original>R</original>
    <variation>Q</variation>
    <location>
        <position position="216"/>
    </location>
</feature>
<feature type="sequence conflict" description="In Ref. 3; CAI64396." evidence="6" ref="3">
    <original>K</original>
    <variation>R</variation>
    <location>
        <position position="219"/>
    </location>
</feature>
<feature type="sequence conflict" description="In Ref. 3; CAI64396." evidence="6" ref="3">
    <original>M</original>
    <variation>T</variation>
    <location>
        <position position="307"/>
    </location>
</feature>
<feature type="sequence conflict" description="In Ref. 3; CAI64396." evidence="6" ref="3">
    <original>A</original>
    <variation>S</variation>
    <location>
        <position position="322"/>
    </location>
</feature>
<feature type="sequence conflict" description="In Ref. 3; CAI64396." evidence="6" ref="3">
    <original>TK</original>
    <variation>AT</variation>
    <location>
        <begin position="440"/>
        <end position="441"/>
    </location>
</feature>
<feature type="sequence conflict" description="In Ref. 3; CAI64396." evidence="6" ref="3">
    <original>T</original>
    <variation>TVA</variation>
    <location>
        <position position="444"/>
    </location>
</feature>
<feature type="turn" evidence="13">
    <location>
        <begin position="7"/>
        <end position="9"/>
    </location>
</feature>
<feature type="strand" evidence="13">
    <location>
        <begin position="24"/>
        <end position="32"/>
    </location>
</feature>
<feature type="turn" evidence="13">
    <location>
        <begin position="33"/>
        <end position="36"/>
    </location>
</feature>
<feature type="strand" evidence="13">
    <location>
        <begin position="37"/>
        <end position="44"/>
    </location>
</feature>
<feature type="helix" evidence="13">
    <location>
        <begin position="48"/>
        <end position="50"/>
    </location>
</feature>
<feature type="strand" evidence="13">
    <location>
        <begin position="55"/>
        <end position="59"/>
    </location>
</feature>
<feature type="turn" evidence="13">
    <location>
        <begin position="62"/>
        <end position="64"/>
    </location>
</feature>
<feature type="turn" evidence="13">
    <location>
        <begin position="67"/>
        <end position="70"/>
    </location>
</feature>
<feature type="helix" evidence="13">
    <location>
        <begin position="71"/>
        <end position="74"/>
    </location>
</feature>
<feature type="strand" evidence="13">
    <location>
        <begin position="75"/>
        <end position="81"/>
    </location>
</feature>
<feature type="helix" evidence="13">
    <location>
        <begin position="83"/>
        <end position="85"/>
    </location>
</feature>
<feature type="strand" evidence="13">
    <location>
        <begin position="88"/>
        <end position="90"/>
    </location>
</feature>
<feature type="helix" evidence="13">
    <location>
        <begin position="95"/>
        <end position="97"/>
    </location>
</feature>
<feature type="strand" evidence="13">
    <location>
        <begin position="99"/>
        <end position="104"/>
    </location>
</feature>
<feature type="strand" evidence="13">
    <location>
        <begin position="114"/>
        <end position="117"/>
    </location>
</feature>
<feature type="helix" evidence="13">
    <location>
        <begin position="118"/>
        <end position="122"/>
    </location>
</feature>
<feature type="helix" evidence="13">
    <location>
        <begin position="126"/>
        <end position="143"/>
    </location>
</feature>
<feature type="helix" evidence="13">
    <location>
        <begin position="145"/>
        <end position="147"/>
    </location>
</feature>
<feature type="strand" evidence="13">
    <location>
        <begin position="151"/>
        <end position="158"/>
    </location>
</feature>
<feature type="helix" evidence="13">
    <location>
        <begin position="160"/>
        <end position="174"/>
    </location>
</feature>
<feature type="strand" evidence="13">
    <location>
        <begin position="180"/>
        <end position="189"/>
    </location>
</feature>
<feature type="helix" evidence="13">
    <location>
        <begin position="193"/>
        <end position="205"/>
    </location>
</feature>
<feature type="turn" evidence="13">
    <location>
        <begin position="206"/>
        <end position="208"/>
    </location>
</feature>
<feature type="helix" evidence="13">
    <location>
        <begin position="212"/>
        <end position="222"/>
    </location>
</feature>
<feature type="strand" evidence="13">
    <location>
        <begin position="227"/>
        <end position="229"/>
    </location>
</feature>
<feature type="helix" evidence="13">
    <location>
        <begin position="232"/>
        <end position="245"/>
    </location>
</feature>
<feature type="helix" evidence="13">
    <location>
        <begin position="292"/>
        <end position="301"/>
    </location>
</feature>
<feature type="helix" evidence="13">
    <location>
        <begin position="303"/>
        <end position="308"/>
    </location>
</feature>
<feature type="strand" evidence="12">
    <location>
        <begin position="312"/>
        <end position="315"/>
    </location>
</feature>
<feature type="helix" evidence="13">
    <location>
        <begin position="326"/>
        <end position="330"/>
    </location>
</feature>
<feature type="helix" evidence="13">
    <location>
        <begin position="340"/>
        <end position="348"/>
    </location>
</feature>
<feature type="strand" evidence="13">
    <location>
        <begin position="352"/>
        <end position="358"/>
    </location>
</feature>
<feature type="strand" evidence="13">
    <location>
        <begin position="362"/>
        <end position="364"/>
    </location>
</feature>
<feature type="helix" evidence="13">
    <location>
        <begin position="366"/>
        <end position="374"/>
    </location>
</feature>
<feature type="strand" evidence="13">
    <location>
        <begin position="380"/>
        <end position="389"/>
    </location>
</feature>
<feature type="strand" evidence="13">
    <location>
        <begin position="392"/>
        <end position="400"/>
    </location>
</feature>
<feature type="strand" evidence="13">
    <location>
        <begin position="403"/>
        <end position="408"/>
    </location>
</feature>
<feature type="helix" evidence="13">
    <location>
        <begin position="415"/>
        <end position="418"/>
    </location>
</feature>
<feature type="helix" evidence="13">
    <location>
        <begin position="420"/>
        <end position="432"/>
    </location>
</feature>
<reference key="1">
    <citation type="journal article" date="1987" name="Carlsberg Res. Commun.">
        <title>Primary structure and enzymatic properties of carboxypeptidase II from wheat bran.</title>
        <authorList>
            <person name="Breddam K."/>
            <person name="Soerensen S.B."/>
            <person name="Svendsen I."/>
        </authorList>
    </citation>
    <scope>PROTEIN SEQUENCE OF 1-263 AND 285-444</scope>
</reference>
<reference key="2">
    <citation type="journal article" date="2006" name="Allergy">
        <title>Screening the allergenic repertoires of wheat and maize with sera from double-blind, placebo-controlled food challenge positive patients.</title>
        <authorList>
            <person name="Weichel M."/>
            <person name="Vergoossen N.J."/>
            <person name="Bonomi S."/>
            <person name="Scibilia J."/>
            <person name="Ortolani C."/>
            <person name="Ballmer-Weber B.K."/>
            <person name="Pastorello E.A."/>
            <person name="Crameri R."/>
        </authorList>
    </citation>
    <scope>NUCLEOTIDE SEQUENCE [MRNA] OF 187-444</scope>
    <scope>ALLERGEN</scope>
    <source>
        <strain>cv. Wyuna</strain>
        <tissue>Endosperm</tissue>
    </source>
</reference>
<reference key="3">
    <citation type="journal article" date="1990" name="J. Biol. Chem.">
        <title>Structure of wheat serine carboxypeptidase II at 3.5-A resolution. A new class of serine proteinase.</title>
        <authorList>
            <person name="Liao D.-I."/>
            <person name="Remington S.J."/>
        </authorList>
    </citation>
    <scope>X-RAY CRYSTALLOGRAPHY (3.5 ANGSTROMS)</scope>
</reference>
<reference key="4">
    <citation type="journal article" date="1992" name="Biochemistry">
        <title>Refined atomic model of wheat serine carboxypeptidase II at 2.2-A resolution.</title>
        <authorList>
            <person name="Liao D.-I."/>
            <person name="Breddam K."/>
            <person name="Sweet R.M."/>
            <person name="Bullock T."/>
            <person name="Remington S.J."/>
        </authorList>
    </citation>
    <scope>X-RAY CRYSTALLOGRAPHY (2.20 ANGSTROMS) OF 1-259 AND 287-438</scope>
    <scope>GLYCOSYLATION AT ASN-116; ASN-127 AND ASN-312</scope>
    <scope>DISULFIDE BONDS</scope>
</reference>
<reference key="5">
    <citation type="journal article" date="1994" name="Biochemistry">
        <title>Structure of the complex of L-benzylsuccinate with wheat serine carboxypeptidase II at 2.0-A resolution.</title>
        <authorList>
            <person name="Bullock T.L."/>
            <person name="Branchaud B."/>
            <person name="Remington S.J."/>
        </authorList>
    </citation>
    <scope>X-RAY CRYSTALLOGRAPHY (2.00 ANGSTROMS) OF 6-260 AND 287-439 IN COMPLEX WITH SUBSTRATE ANALOG</scope>
    <scope>GLYCOSYLATION AT ASN-116; ASN-127 AND ASN-312</scope>
    <scope>DISULFIDE BONDS</scope>
</reference>
<reference key="6">
    <citation type="journal article" date="1996" name="J. Mol. Biol.">
        <title>Peptide aldehyde complexes with wheat serine carboxypeptidase II: implications for the catalytic mechanism and substrate specificity.</title>
        <authorList>
            <person name="Bullock T.L."/>
            <person name="Breddam K."/>
            <person name="Remington S.J."/>
        </authorList>
    </citation>
    <scope>X-RAY CRYSTALLOGRAPHY (2.08 ANGSTROMS) OF 1-263 AND 285-444 IN COMPLEX WITH SUBSTRATE ANALOGS</scope>
    <scope>GLYCOSYLATION AT ASN-116; ASN-127 AND ASN-312</scope>
    <scope>DISULFIDE BONDS</scope>
</reference>
<proteinExistence type="evidence at protein level"/>
<keyword id="KW-0002">3D-structure</keyword>
<keyword id="KW-0020">Allergen</keyword>
<keyword id="KW-0121">Carboxypeptidase</keyword>
<keyword id="KW-0903">Direct protein sequencing</keyword>
<keyword id="KW-1015">Disulfide bond</keyword>
<keyword id="KW-0325">Glycoprotein</keyword>
<keyword id="KW-0378">Hydrolase</keyword>
<keyword id="KW-0645">Protease</keyword>
<keyword id="KW-1185">Reference proteome</keyword>
<keyword id="KW-0865">Zymogen</keyword>
<protein>
    <recommendedName>
        <fullName>Serine carboxypeptidase 2</fullName>
        <ecNumber>3.4.16.6</ecNumber>
    </recommendedName>
    <alternativeName>
        <fullName>CPDW-II</fullName>
        <shortName>CP-WII</shortName>
    </alternativeName>
    <alternativeName>
        <fullName>Carboxypeptidase D</fullName>
    </alternativeName>
    <alternativeName>
        <fullName>Serine carboxypeptidase II</fullName>
    </alternativeName>
    <component>
        <recommendedName>
            <fullName>Serine carboxypeptidase 2 chain A</fullName>
        </recommendedName>
        <alternativeName>
            <fullName>Serine carboxypeptidase II chain A</fullName>
        </alternativeName>
    </component>
    <component>
        <recommendedName>
            <fullName>Serine carboxypeptidase 2 chain B</fullName>
        </recommendedName>
        <alternativeName>
            <fullName>Serine carboxypeptidase II chain B</fullName>
        </alternativeName>
    </component>
</protein>